<dbReference type="EMBL" id="L77117">
    <property type="protein sequence ID" value="AAB98275.1"/>
    <property type="molecule type" value="Genomic_DNA"/>
</dbReference>
<dbReference type="PIR" id="G64335">
    <property type="entry name" value="G64335"/>
</dbReference>
<dbReference type="RefSeq" id="WP_010869784.1">
    <property type="nucleotide sequence ID" value="NC_000909.1"/>
</dbReference>
<dbReference type="SMR" id="Q57734"/>
<dbReference type="STRING" id="243232.MJ_0286"/>
<dbReference type="PaxDb" id="243232-MJ_0286"/>
<dbReference type="EnsemblBacteria" id="AAB98275">
    <property type="protein sequence ID" value="AAB98275"/>
    <property type="gene ID" value="MJ_0286"/>
</dbReference>
<dbReference type="GeneID" id="1451141"/>
<dbReference type="KEGG" id="mja:MJ_0286"/>
<dbReference type="eggNOG" id="arCOG09661">
    <property type="taxonomic scope" value="Archaea"/>
</dbReference>
<dbReference type="HOGENOM" id="CLU_2079428_0_0_2"/>
<dbReference type="InParanoid" id="Q57734"/>
<dbReference type="OrthoDB" id="64181at2157"/>
<dbReference type="Proteomes" id="UP000000805">
    <property type="component" value="Chromosome"/>
</dbReference>
<organism>
    <name type="scientific">Methanocaldococcus jannaschii (strain ATCC 43067 / DSM 2661 / JAL-1 / JCM 10045 / NBRC 100440)</name>
    <name type="common">Methanococcus jannaschii</name>
    <dbReference type="NCBI Taxonomy" id="243232"/>
    <lineage>
        <taxon>Archaea</taxon>
        <taxon>Methanobacteriati</taxon>
        <taxon>Methanobacteriota</taxon>
        <taxon>Methanomada group</taxon>
        <taxon>Methanococci</taxon>
        <taxon>Methanococcales</taxon>
        <taxon>Methanocaldococcaceae</taxon>
        <taxon>Methanocaldococcus</taxon>
    </lineage>
</organism>
<proteinExistence type="predicted"/>
<gene>
    <name type="ordered locus">MJ0286</name>
</gene>
<sequence length="117" mass="14099">MKKFGTVLLSDIVKECLSGDEFAREMMEDLFNFLIKLRLWRWKYLLSQNQKNEIQMSDLLALIKEEKEGINRLFSFLYQTDIPVENRIEILMLLKEFVKEEIKWISMDVSEINFVKK</sequence>
<name>Y286_METJA</name>
<reference key="1">
    <citation type="journal article" date="1996" name="Science">
        <title>Complete genome sequence of the methanogenic archaeon, Methanococcus jannaschii.</title>
        <authorList>
            <person name="Bult C.J."/>
            <person name="White O."/>
            <person name="Olsen G.J."/>
            <person name="Zhou L."/>
            <person name="Fleischmann R.D."/>
            <person name="Sutton G.G."/>
            <person name="Blake J.A."/>
            <person name="FitzGerald L.M."/>
            <person name="Clayton R.A."/>
            <person name="Gocayne J.D."/>
            <person name="Kerlavage A.R."/>
            <person name="Dougherty B.A."/>
            <person name="Tomb J.-F."/>
            <person name="Adams M.D."/>
            <person name="Reich C.I."/>
            <person name="Overbeek R."/>
            <person name="Kirkness E.F."/>
            <person name="Weinstock K.G."/>
            <person name="Merrick J.M."/>
            <person name="Glodek A."/>
            <person name="Scott J.L."/>
            <person name="Geoghagen N.S.M."/>
            <person name="Weidman J.F."/>
            <person name="Fuhrmann J.L."/>
            <person name="Nguyen D."/>
            <person name="Utterback T.R."/>
            <person name="Kelley J.M."/>
            <person name="Peterson J.D."/>
            <person name="Sadow P.W."/>
            <person name="Hanna M.C."/>
            <person name="Cotton M.D."/>
            <person name="Roberts K.M."/>
            <person name="Hurst M.A."/>
            <person name="Kaine B.P."/>
            <person name="Borodovsky M."/>
            <person name="Klenk H.-P."/>
            <person name="Fraser C.M."/>
            <person name="Smith H.O."/>
            <person name="Woese C.R."/>
            <person name="Venter J.C."/>
        </authorList>
    </citation>
    <scope>NUCLEOTIDE SEQUENCE [LARGE SCALE GENOMIC DNA]</scope>
    <source>
        <strain>ATCC 43067 / DSM 2661 / JAL-1 / JCM 10045 / NBRC 100440</strain>
    </source>
</reference>
<keyword id="KW-1185">Reference proteome</keyword>
<accession>Q57734</accession>
<protein>
    <recommendedName>
        <fullName>Uncharacterized protein MJ0286</fullName>
    </recommendedName>
</protein>
<feature type="chain" id="PRO_0000106773" description="Uncharacterized protein MJ0286">
    <location>
        <begin position="1"/>
        <end position="117"/>
    </location>
</feature>